<gene>
    <name evidence="6" type="ordered locus">TM_1597</name>
</gene>
<proteinExistence type="evidence at protein level"/>
<sequence>MVYPRLLINLKEIEENARKVVEMASRRGIEIVGVTKVTLGDPRFAETLRKAGIGILGESRIRNVLRMKKAGIEGPFMLLRLPMMSELVEDVKHFDYIMVSDPDVAKKVDELSREMKRNVKIIYMIDVGDLREGVWFEKAVEEIAQCRGANIVGIGTNFGCYGGIIPTREKFEILLDIKEKLEKNHGFNIEIVSGGNTPALYALENGEIPEGINQLRIGEAIVLGRDITNNRVIDWLSQNTFLIEAEVIEVKEKPSVPLGKRGLDVFGRKVDFVDRGIRKRAICALGEQDIDSRGLIPVDKGVEVLHASSDHIVLDVTDFGDVKVGDVFRFRMTYSCLLKAMTSPFVEKVYEPSI</sequence>
<comment type="function">
    <text evidence="2">Catalyzes the interconversion of D-lysine and L-lysine. Has also high activity toward ornithine, and weaker activity toward alanine. Contributes to production of D-lysine and D-alanine for use as peptidoglycan components.</text>
</comment>
<comment type="catalytic activity">
    <reaction evidence="2">
        <text>L-lysine = D-lysine</text>
        <dbReference type="Rhea" id="RHEA:22864"/>
        <dbReference type="ChEBI" id="CHEBI:32551"/>
        <dbReference type="ChEBI" id="CHEBI:32557"/>
        <dbReference type="EC" id="5.1.1.5"/>
    </reaction>
</comment>
<comment type="catalytic activity">
    <reaction evidence="2">
        <text>L-ornithine = D-ornithine</text>
        <dbReference type="Rhea" id="RHEA:11584"/>
        <dbReference type="ChEBI" id="CHEBI:46911"/>
        <dbReference type="ChEBI" id="CHEBI:57668"/>
        <dbReference type="EC" id="5.1.1.12"/>
    </reaction>
</comment>
<comment type="cofactor">
    <cofactor evidence="2">
        <name>pyridoxal 5'-phosphate</name>
        <dbReference type="ChEBI" id="CHEBI:597326"/>
    </cofactor>
</comment>
<comment type="biophysicochemical properties">
    <kinetics>
        <KM evidence="2">2.14 mM for L-lysine</KM>
        <KM evidence="2">1.77 mM for D-lysine</KM>
        <KM evidence="2">1.13 mM for L-ornithine</KM>
        <KM evidence="2">1.01 mM for D-ornithine</KM>
        <KM evidence="2">375 mM for L-alanine</KM>
        <KM evidence="2">282 mM for D-alanine</KM>
        <Vmax evidence="2">16.9 umol/sec/mg enzyme with L-lysine as substrate</Vmax>
        <Vmax evidence="2">16.3 umol/sec/mg enzyme with D-lysine as substrate</Vmax>
        <Vmax evidence="2">13.1 umol/sec/mg enzyme with L-ornithine as substrate</Vmax>
        <Vmax evidence="2">10.9 umol/sec/mg enzyme with D-ornithine as substrate</Vmax>
        <Vmax evidence="2">23.5 umol/sec/mg enzyme with L-alanine as substrate</Vmax>
        <Vmax evidence="2">17.7 umol/sec/mg enzyme with D-alanine as substrate</Vmax>
        <text evidence="2">kcat is 693 sec(-1) with L-lysine as substrate. kcat is 669 sec(-1) with D-lysine as substrate. kcat is 537 sec(-1) with L-ornithine as substrate. kcat is 447 sec(-1) with D-ornithine as substrate. kcat is 965 sec(-1) with L-alanine as substrate. kcat is 725 sec(-1) with D-alanine as substrate.</text>
    </kinetics>
    <phDependence>
        <text evidence="2">Optimum pH is 9.0-10.0.</text>
    </phDependence>
    <temperatureDependence>
        <text evidence="2">Optimum temperature is 85-95 degrees Celsius.</text>
    </temperatureDependence>
</comment>
<comment type="pathway">
    <text evidence="5">Cell wall biogenesis; peptidoglycan biosynthesis.</text>
</comment>
<comment type="subunit">
    <text evidence="2">Homodimer.</text>
</comment>
<comment type="similarity">
    <text evidence="4">Belongs to the alanine racemase family.</text>
</comment>
<accession>Q9X1T3</accession>
<accession>G4FFY5</accession>
<feature type="chain" id="PRO_0000448682" description="Lysine racemase">
    <location>
        <begin position="1"/>
        <end position="354"/>
    </location>
</feature>
<feature type="modified residue" description="N6-(pyridoxal phosphate)lysine" evidence="1">
    <location>
        <position position="36"/>
    </location>
</feature>
<protein>
    <recommendedName>
        <fullName evidence="3">Lysine racemase</fullName>
        <shortName evidence="3">Lys racemase</shortName>
        <ecNumber evidence="2">5.1.1.5</ecNumber>
    </recommendedName>
    <alternativeName>
        <fullName evidence="4">Ornithine racemase</fullName>
        <ecNumber evidence="2">5.1.1.12</ecNumber>
    </alternativeName>
</protein>
<name>LYSRA_THEMA</name>
<keyword id="KW-0133">Cell shape</keyword>
<keyword id="KW-0961">Cell wall biogenesis/degradation</keyword>
<keyword id="KW-0413">Isomerase</keyword>
<keyword id="KW-0573">Peptidoglycan synthesis</keyword>
<keyword id="KW-0663">Pyridoxal phosphate</keyword>
<keyword id="KW-1185">Reference proteome</keyword>
<organism>
    <name type="scientific">Thermotoga maritima (strain ATCC 43589 / DSM 3109 / JCM 10099 / NBRC 100826 / MSB8)</name>
    <dbReference type="NCBI Taxonomy" id="243274"/>
    <lineage>
        <taxon>Bacteria</taxon>
        <taxon>Thermotogati</taxon>
        <taxon>Thermotogota</taxon>
        <taxon>Thermotogae</taxon>
        <taxon>Thermotogales</taxon>
        <taxon>Thermotogaceae</taxon>
        <taxon>Thermotoga</taxon>
    </lineage>
</organism>
<evidence type="ECO:0000250" key="1">
    <source>
        <dbReference type="UniProtKB" id="P10724"/>
    </source>
</evidence>
<evidence type="ECO:0000269" key="2">
    <source>
    </source>
</evidence>
<evidence type="ECO:0000303" key="3">
    <source>
    </source>
</evidence>
<evidence type="ECO:0000305" key="4"/>
<evidence type="ECO:0000305" key="5">
    <source>
    </source>
</evidence>
<evidence type="ECO:0000312" key="6">
    <source>
        <dbReference type="EMBL" id="AAD36664.1"/>
    </source>
</evidence>
<dbReference type="EC" id="5.1.1.5" evidence="2"/>
<dbReference type="EC" id="5.1.1.12" evidence="2"/>
<dbReference type="EMBL" id="AE000512">
    <property type="protein sequence ID" value="AAD36664.1"/>
    <property type="molecule type" value="Genomic_DNA"/>
</dbReference>
<dbReference type="PIR" id="A72234">
    <property type="entry name" value="A72234"/>
</dbReference>
<dbReference type="RefSeq" id="NP_229397.1">
    <property type="nucleotide sequence ID" value="NC_000853.1"/>
</dbReference>
<dbReference type="RefSeq" id="WP_004082040.1">
    <property type="nucleotide sequence ID" value="NZ_CP011107.1"/>
</dbReference>
<dbReference type="SMR" id="Q9X1T3"/>
<dbReference type="STRING" id="243274.TM_1597"/>
<dbReference type="PaxDb" id="243274-THEMA_06265"/>
<dbReference type="EnsemblBacteria" id="AAD36664">
    <property type="protein sequence ID" value="AAD36664"/>
    <property type="gene ID" value="TM_1597"/>
</dbReference>
<dbReference type="KEGG" id="tma:TM1597"/>
<dbReference type="KEGG" id="tmi:THEMA_06265"/>
<dbReference type="KEGG" id="tmw:THMA_1637"/>
<dbReference type="PATRIC" id="fig|243274.18.peg.1213"/>
<dbReference type="InParanoid" id="Q9X1T3"/>
<dbReference type="OrthoDB" id="504078at2"/>
<dbReference type="BioCyc" id="MetaCyc:MONOMER-21250"/>
<dbReference type="SABIO-RK" id="Q9X1T3"/>
<dbReference type="UniPathway" id="UPA00219"/>
<dbReference type="Proteomes" id="UP000008183">
    <property type="component" value="Chromosome"/>
</dbReference>
<dbReference type="GO" id="GO:0005829">
    <property type="term" value="C:cytosol"/>
    <property type="evidence" value="ECO:0000318"/>
    <property type="project" value="GO_Central"/>
</dbReference>
<dbReference type="GO" id="GO:0008784">
    <property type="term" value="F:alanine racemase activity"/>
    <property type="evidence" value="ECO:0000318"/>
    <property type="project" value="GO_Central"/>
</dbReference>
<dbReference type="GO" id="GO:0018113">
    <property type="term" value="F:lysine racemase activity"/>
    <property type="evidence" value="ECO:0007669"/>
    <property type="project" value="UniProtKB-EC"/>
</dbReference>
<dbReference type="GO" id="GO:0050157">
    <property type="term" value="F:ornithine racemase activity"/>
    <property type="evidence" value="ECO:0007669"/>
    <property type="project" value="UniProtKB-EC"/>
</dbReference>
<dbReference type="GO" id="GO:0030170">
    <property type="term" value="F:pyridoxal phosphate binding"/>
    <property type="evidence" value="ECO:0000318"/>
    <property type="project" value="GO_Central"/>
</dbReference>
<dbReference type="GO" id="GO:0071555">
    <property type="term" value="P:cell wall organization"/>
    <property type="evidence" value="ECO:0007669"/>
    <property type="project" value="UniProtKB-KW"/>
</dbReference>
<dbReference type="GO" id="GO:0009252">
    <property type="term" value="P:peptidoglycan biosynthetic process"/>
    <property type="evidence" value="ECO:0007669"/>
    <property type="project" value="UniProtKB-UniPathway"/>
</dbReference>
<dbReference type="GO" id="GO:0008360">
    <property type="term" value="P:regulation of cell shape"/>
    <property type="evidence" value="ECO:0007669"/>
    <property type="project" value="UniProtKB-KW"/>
</dbReference>
<dbReference type="CDD" id="cd06815">
    <property type="entry name" value="PLPDE_III_AR_like_1"/>
    <property type="match status" value="1"/>
</dbReference>
<dbReference type="FunFam" id="3.20.20.10:FF:000013">
    <property type="entry name" value="Alanine/ornithine racemase family PLP-dependent enzyme"/>
    <property type="match status" value="1"/>
</dbReference>
<dbReference type="Gene3D" id="3.20.20.10">
    <property type="entry name" value="Alanine racemase"/>
    <property type="match status" value="1"/>
</dbReference>
<dbReference type="InterPro" id="IPR001608">
    <property type="entry name" value="Ala_racemase_N"/>
</dbReference>
<dbReference type="InterPro" id="IPR029066">
    <property type="entry name" value="PLP-binding_barrel"/>
</dbReference>
<dbReference type="PANTHER" id="PTHR30511">
    <property type="entry name" value="ALANINE RACEMASE"/>
    <property type="match status" value="1"/>
</dbReference>
<dbReference type="PANTHER" id="PTHR30511:SF3">
    <property type="entry name" value="LYSINE RACEMASE"/>
    <property type="match status" value="1"/>
</dbReference>
<dbReference type="Pfam" id="PF01168">
    <property type="entry name" value="Ala_racemase_N"/>
    <property type="match status" value="1"/>
</dbReference>
<dbReference type="SUPFAM" id="SSF51419">
    <property type="entry name" value="PLP-binding barrel"/>
    <property type="match status" value="1"/>
</dbReference>
<reference key="1">
    <citation type="journal article" date="1999" name="Nature">
        <title>Evidence for lateral gene transfer between Archaea and Bacteria from genome sequence of Thermotoga maritima.</title>
        <authorList>
            <person name="Nelson K.E."/>
            <person name="Clayton R.A."/>
            <person name="Gill S.R."/>
            <person name="Gwinn M.L."/>
            <person name="Dodson R.J."/>
            <person name="Haft D.H."/>
            <person name="Hickey E.K."/>
            <person name="Peterson J.D."/>
            <person name="Nelson W.C."/>
            <person name="Ketchum K.A."/>
            <person name="McDonald L.A."/>
            <person name="Utterback T.R."/>
            <person name="Malek J.A."/>
            <person name="Linher K.D."/>
            <person name="Garrett M.M."/>
            <person name="Stewart A.M."/>
            <person name="Cotton M.D."/>
            <person name="Pratt M.S."/>
            <person name="Phillips C.A."/>
            <person name="Richardson D.L."/>
            <person name="Heidelberg J.F."/>
            <person name="Sutton G.G."/>
            <person name="Fleischmann R.D."/>
            <person name="Eisen J.A."/>
            <person name="White O."/>
            <person name="Salzberg S.L."/>
            <person name="Smith H.O."/>
            <person name="Venter J.C."/>
            <person name="Fraser C.M."/>
        </authorList>
    </citation>
    <scope>NUCLEOTIDE SEQUENCE [LARGE SCALE GENOMIC DNA]</scope>
    <source>
        <strain>ATCC 43589 / DSM 3109 / JCM 10099 / NBRC 100826 / MSB8</strain>
    </source>
</reference>
<reference key="2">
    <citation type="journal article" date="2019" name="FEBS J.">
        <title>Elucidation of the D-lysine biosynthetic pathway in the hyperthermophile Thermotoga maritima.</title>
        <authorList>
            <person name="Miyamoto T."/>
            <person name="Katane M."/>
            <person name="Saitoh Y."/>
            <person name="Sekine M."/>
            <person name="Homma H."/>
        </authorList>
    </citation>
    <scope>FUNCTION</scope>
    <scope>CATALYTIC ACTIVITY</scope>
    <scope>COFACTOR</scope>
    <scope>BIOPHYSICOCHEMICAL PROPERTIES</scope>
    <scope>PATHWAY</scope>
    <scope>SUBUNIT</scope>
    <source>
        <strain>ATCC 43589 / DSM 3109 / JCM 10099 / NBRC 100826 / MSB8</strain>
    </source>
</reference>